<dbReference type="EC" id="4.1.1.96" evidence="5"/>
<dbReference type="EMBL" id="AE016795">
    <property type="protein sequence ID" value="AAO11372.1"/>
    <property type="molecule type" value="Genomic_DNA"/>
</dbReference>
<dbReference type="RefSeq" id="WP_011080852.1">
    <property type="nucleotide sequence ID" value="NC_004459.3"/>
</dbReference>
<dbReference type="SMR" id="Q8D8D2"/>
<dbReference type="KEGG" id="vvu:VV1_3048"/>
<dbReference type="HOGENOM" id="CLU_038560_0_0_6"/>
<dbReference type="BioCyc" id="MetaCyc:MONOMER-15804"/>
<dbReference type="SABIO-RK" id="Q8D8D2"/>
<dbReference type="Proteomes" id="UP000002275">
    <property type="component" value="Chromosome 1"/>
</dbReference>
<dbReference type="GO" id="GO:0005737">
    <property type="term" value="C:cytoplasm"/>
    <property type="evidence" value="ECO:0007669"/>
    <property type="project" value="UniProtKB-SubCell"/>
</dbReference>
<dbReference type="GO" id="GO:0016831">
    <property type="term" value="F:carboxy-lyase activity"/>
    <property type="evidence" value="ECO:0000314"/>
    <property type="project" value="UniProtKB"/>
</dbReference>
<dbReference type="GO" id="GO:0008836">
    <property type="term" value="F:diaminopimelate decarboxylase activity"/>
    <property type="evidence" value="ECO:0007669"/>
    <property type="project" value="TreeGrafter"/>
</dbReference>
<dbReference type="GO" id="GO:0042803">
    <property type="term" value="F:protein homodimerization activity"/>
    <property type="evidence" value="ECO:0000250"/>
    <property type="project" value="UniProtKB"/>
</dbReference>
<dbReference type="GO" id="GO:0030170">
    <property type="term" value="F:pyridoxal phosphate binding"/>
    <property type="evidence" value="ECO:0000250"/>
    <property type="project" value="UniProtKB"/>
</dbReference>
<dbReference type="GO" id="GO:0009089">
    <property type="term" value="P:lysine biosynthetic process via diaminopimelate"/>
    <property type="evidence" value="ECO:0007669"/>
    <property type="project" value="TreeGrafter"/>
</dbReference>
<dbReference type="GO" id="GO:0045312">
    <property type="term" value="P:nor-spermidine biosynthetic process"/>
    <property type="evidence" value="ECO:0000314"/>
    <property type="project" value="UniProtKB"/>
</dbReference>
<dbReference type="GO" id="GO:0008295">
    <property type="term" value="P:spermidine biosynthetic process"/>
    <property type="evidence" value="ECO:0000314"/>
    <property type="project" value="UniProtKB"/>
</dbReference>
<dbReference type="CDD" id="cd06829">
    <property type="entry name" value="PLPDE_III_CANSDC"/>
    <property type="match status" value="1"/>
</dbReference>
<dbReference type="FunFam" id="2.40.37.10:FF:000016">
    <property type="entry name" value="Carboxynorspermidine/carboxyspermidine decarboxylase"/>
    <property type="match status" value="1"/>
</dbReference>
<dbReference type="FunFam" id="3.20.20.10:FF:000012">
    <property type="entry name" value="Carboxynorspermidine/carboxyspermidine decarboxylase"/>
    <property type="match status" value="1"/>
</dbReference>
<dbReference type="Gene3D" id="3.20.20.10">
    <property type="entry name" value="Alanine racemase"/>
    <property type="match status" value="1"/>
</dbReference>
<dbReference type="Gene3D" id="2.40.37.10">
    <property type="entry name" value="Lyase, Ornithine Decarboxylase, Chain A, domain 1"/>
    <property type="match status" value="1"/>
</dbReference>
<dbReference type="InterPro" id="IPR009006">
    <property type="entry name" value="Ala_racemase/Decarboxylase_C"/>
</dbReference>
<dbReference type="InterPro" id="IPR005730">
    <property type="entry name" value="Nsp_de-COase"/>
</dbReference>
<dbReference type="InterPro" id="IPR029066">
    <property type="entry name" value="PLP-binding_barrel"/>
</dbReference>
<dbReference type="NCBIfam" id="TIGR01047">
    <property type="entry name" value="nspC"/>
    <property type="match status" value="1"/>
</dbReference>
<dbReference type="PANTHER" id="PTHR43727:SF1">
    <property type="entry name" value="CARBOXYNORSPERMIDINE_CARBOXYSPERMIDINE DECARBOXYLASE"/>
    <property type="match status" value="1"/>
</dbReference>
<dbReference type="PANTHER" id="PTHR43727">
    <property type="entry name" value="DIAMINOPIMELATE DECARBOXYLASE"/>
    <property type="match status" value="1"/>
</dbReference>
<dbReference type="PIRSF" id="PIRSF038941">
    <property type="entry name" value="NspC"/>
    <property type="match status" value="1"/>
</dbReference>
<dbReference type="SUPFAM" id="SSF50621">
    <property type="entry name" value="Alanine racemase C-terminal domain-like"/>
    <property type="match status" value="1"/>
</dbReference>
<dbReference type="SUPFAM" id="SSF51419">
    <property type="entry name" value="PLP-binding barrel"/>
    <property type="match status" value="1"/>
</dbReference>
<feature type="chain" id="PRO_0000420248" description="Carboxynorspermidine/carboxyspermidine decarboxylase">
    <location>
        <begin position="1"/>
        <end position="377"/>
    </location>
</feature>
<feature type="binding site" evidence="2">
    <location>
        <position position="238"/>
    </location>
    <ligand>
        <name>substrate</name>
    </ligand>
</feature>
<feature type="binding site" evidence="2">
    <location>
        <position position="274"/>
    </location>
    <ligand>
        <name>substrate</name>
    </ligand>
</feature>
<feature type="modified residue" description="N6-(pyridoxal phosphate)lysine" evidence="2">
    <location>
        <position position="41"/>
    </location>
</feature>
<name>NSPC_VIBVU</name>
<reference key="1">
    <citation type="submission" date="2002-12" db="EMBL/GenBank/DDBJ databases">
        <title>Complete genome sequence of Vibrio vulnificus CMCP6.</title>
        <authorList>
            <person name="Rhee J.H."/>
            <person name="Kim S.Y."/>
            <person name="Chung S.S."/>
            <person name="Kim J.J."/>
            <person name="Moon Y.H."/>
            <person name="Jeong H."/>
            <person name="Choy H.E."/>
        </authorList>
    </citation>
    <scope>NUCLEOTIDE SEQUENCE [LARGE SCALE GENOMIC DNA]</scope>
    <source>
        <strain>CMCP6</strain>
    </source>
</reference>
<reference key="2">
    <citation type="journal article" date="2009" name="J. Biol. Chem.">
        <title>An alternative polyamine biosynthetic pathway is widespread in bacteria and essential for biofilm formation in Vibrio cholerae.</title>
        <authorList>
            <person name="Lee J."/>
            <person name="Sperandio V."/>
            <person name="Frantz D.E."/>
            <person name="Longgood J."/>
            <person name="Camilli A."/>
            <person name="Phillips M.A."/>
            <person name="Michael A.J."/>
        </authorList>
    </citation>
    <scope>FUNCTION</scope>
    <scope>CATALYTIC ACTIVITY</scope>
    <scope>SUBSTRATE SPECIFICITY</scope>
    <scope>BIOPHYSICOCHEMICAL PROPERTIES</scope>
    <source>
        <strain evidence="5">CMCP6</strain>
    </source>
</reference>
<gene>
    <name evidence="7" type="primary">nspC</name>
    <name type="ordered locus">VV1_3048</name>
</gene>
<comment type="function">
    <text evidence="5">Catalyzes the decarboxylation of carboxynorspermidine and carboxyspermidine. Carboxynorspermidine is decarboxylated 20-fold more efficiently than carboxyspermidine. Exhibits some activity with L-ornithine, but shows no activity with L-arginine, L-lysine or meso-diaminopimelate.</text>
</comment>
<comment type="catalytic activity">
    <reaction evidence="5">
        <text>carboxynorspermidine + H(+) = norspermidine + CO2</text>
        <dbReference type="Rhea" id="RHEA:34099"/>
        <dbReference type="ChEBI" id="CHEBI:15378"/>
        <dbReference type="ChEBI" id="CHEBI:16526"/>
        <dbReference type="ChEBI" id="CHEBI:57920"/>
        <dbReference type="ChEBI" id="CHEBI:65070"/>
        <dbReference type="EC" id="4.1.1.96"/>
    </reaction>
</comment>
<comment type="catalytic activity">
    <reaction evidence="5">
        <text>carboxyspermidine + H(+) = spermidine + CO2</text>
        <dbReference type="Rhea" id="RHEA:34095"/>
        <dbReference type="ChEBI" id="CHEBI:15378"/>
        <dbReference type="ChEBI" id="CHEBI:16526"/>
        <dbReference type="ChEBI" id="CHEBI:57834"/>
        <dbReference type="ChEBI" id="CHEBI:65072"/>
        <dbReference type="EC" id="4.1.1.96"/>
    </reaction>
</comment>
<comment type="cofactor">
    <cofactor evidence="2">
        <name>pyridoxal 5'-phosphate</name>
        <dbReference type="ChEBI" id="CHEBI:597326"/>
    </cofactor>
</comment>
<comment type="biophysicochemical properties">
    <kinetics>
        <KM evidence="5">0.27 mM for carboxynorspermidine</KM>
        <KM evidence="5">1 mM for carboxyspermidine</KM>
    </kinetics>
</comment>
<comment type="subunit">
    <text evidence="2">Homodimer.</text>
</comment>
<comment type="subcellular location">
    <subcellularLocation>
        <location evidence="1">Cytoplasm</location>
    </subcellularLocation>
</comment>
<comment type="similarity">
    <text evidence="4">Belongs to the Orn/Lys/Arg decarboxylase class-II family. NspC subfamily.</text>
</comment>
<sequence>MNKEQLKTPFFMIDEAKLIQNLEIAKQLKEISGVKLVLALKCFSTWGVFDIIKPYLDGTTSSGPFEVKLGYEKFGGETHAYSVGYSEDDVREVADLCDKIIFNSQSQLAAHRHIVEGKASIGLRLNPGVSYASQDLANPARQFSRLGVQADHIDPAVFDSINGVMFHMNCENKDVDAFIALLDSISERFGAYLNKLDWVSMGGGVFFTWPGYDVEKLGLALKAFSEKHGVQMYLEPGEAIITKTTDLVVTVVDLVENGMKTAIVDSATEAHRLDTLIYKEPASVLEASENGEHEYVIGSCSCLAGDQFCVAKFDQPLHVGQRLHILDSAGYTMVKLNWFNGLKMPSVYCERTNGEIQKLNEFGYEDFKRSLSLWSVQ</sequence>
<keyword id="KW-0963">Cytoplasm</keyword>
<keyword id="KW-0210">Decarboxylase</keyword>
<keyword id="KW-0456">Lyase</keyword>
<keyword id="KW-0620">Polyamine biosynthesis</keyword>
<keyword id="KW-0663">Pyridoxal phosphate</keyword>
<keyword id="KW-0745">Spermidine biosynthesis</keyword>
<accession>Q8D8D2</accession>
<protein>
    <recommendedName>
        <fullName evidence="6 7">Carboxynorspermidine/carboxyspermidine decarboxylase</fullName>
        <shortName evidence="3">CANS DC/CAS DC</shortName>
        <shortName evidence="2">CANSDC/CASDC</shortName>
        <ecNumber evidence="5">4.1.1.96</ecNumber>
    </recommendedName>
</protein>
<organism>
    <name type="scientific">Vibrio vulnificus (strain CMCP6)</name>
    <dbReference type="NCBI Taxonomy" id="216895"/>
    <lineage>
        <taxon>Bacteria</taxon>
        <taxon>Pseudomonadati</taxon>
        <taxon>Pseudomonadota</taxon>
        <taxon>Gammaproteobacteria</taxon>
        <taxon>Vibrionales</taxon>
        <taxon>Vibrionaceae</taxon>
        <taxon>Vibrio</taxon>
    </lineage>
</organism>
<evidence type="ECO:0000250" key="1"/>
<evidence type="ECO:0000250" key="2">
    <source>
        <dbReference type="UniProtKB" id="A8FNH9"/>
    </source>
</evidence>
<evidence type="ECO:0000250" key="3">
    <source>
        <dbReference type="UniProtKB" id="Q56575"/>
    </source>
</evidence>
<evidence type="ECO:0000255" key="4"/>
<evidence type="ECO:0000269" key="5">
    <source>
    </source>
</evidence>
<evidence type="ECO:0000303" key="6">
    <source>
    </source>
</evidence>
<evidence type="ECO:0000312" key="7">
    <source>
        <dbReference type="EMBL" id="AAO11372.1"/>
    </source>
</evidence>
<proteinExistence type="evidence at protein level"/>